<accession>Q7Z5H4</accession>
<accession>A0AVG1</accession>
<accession>Q8NEU5</accession>
<accession>Q8TDU3</accession>
<reference key="1">
    <citation type="journal article" date="2002" name="Curr. Biol.">
        <title>Novel human vomeronasal receptor-like genes reveal species-specific families.</title>
        <authorList>
            <person name="Rodriguez I."/>
            <person name="Mombaerts P."/>
        </authorList>
    </citation>
    <scope>NUCLEOTIDE SEQUENCE [GENOMIC DNA]</scope>
</reference>
<reference key="2">
    <citation type="journal article" date="2003" name="Proc. Natl. Acad. Sci. U.S.A.">
        <title>Evolutionary deterioration of the vomeronasal pheromone transduction pathway in catarrhine primates.</title>
        <authorList>
            <person name="Zhang J."/>
            <person name="Webb D.M."/>
        </authorList>
    </citation>
    <scope>NUCLEOTIDE SEQUENCE [GENOMIC DNA]</scope>
    <scope>VARIANT CYS-350</scope>
</reference>
<reference key="3">
    <citation type="journal article" date="2002" name="FEBS Lett.">
        <title>Identification of G protein-coupled receptor genes from the human genome sequence.</title>
        <authorList>
            <person name="Takeda S."/>
            <person name="Kadowaki S."/>
            <person name="Haga T."/>
            <person name="Takaesu H."/>
            <person name="Mitaku S."/>
        </authorList>
    </citation>
    <scope>NUCLEOTIDE SEQUENCE [LARGE SCALE GENOMIC DNA]</scope>
</reference>
<reference key="4">
    <citation type="journal article" date="2004" name="Genome Res.">
        <title>The status, quality, and expansion of the NIH full-length cDNA project: the Mammalian Gene Collection (MGC).</title>
        <authorList>
            <consortium name="The MGC Project Team"/>
        </authorList>
    </citation>
    <scope>NUCLEOTIDE SEQUENCE [LARGE SCALE MRNA]</scope>
    <source>
        <tissue>Brain</tissue>
    </source>
</reference>
<protein>
    <recommendedName>
        <fullName>Vomeronasal type-1 receptor 5</fullName>
    </recommendedName>
    <alternativeName>
        <fullName>G-protein coupled receptor GPCR26</fullName>
        <shortName>hGPCR26</shortName>
    </alternativeName>
    <alternativeName>
        <fullName>V1r-like receptor 5</fullName>
    </alternativeName>
</protein>
<sequence length="357" mass="40779">MLKLVIIENMAEIMLFSLDLLLFSTDILCFNFPSKMIKLPGFITIQIFFYPQASFGISANTILLLFHIFTFVFSHRSKSIDMIISHLSLIHILLLFTQAILVSLDFFGSQNTQDDLRYKVIVFLNKVMRGLSICTPCLLSVLQAIISPSIFSLAKLKHPSASHILGFFLFSWVLNMFIGVIFCCTLRLPPVKRGQSSVCHTALFLFAHELHPQETVFHTNDFEGCHLYRVHGPLKRLHGDYFIQTIRGYLSAFTQPACPRVSPVKRASQAILLLVSFVFTYWVDFTFSFSGGVTWINDSLLVWLQVIVANSYAAISPLMLIYADNQIFKTLQMLWFKYLSPPKLMLKFNRQCGSTKK</sequence>
<keyword id="KW-1003">Cell membrane</keyword>
<keyword id="KW-0297">G-protein coupled receptor</keyword>
<keyword id="KW-0325">Glycoprotein</keyword>
<keyword id="KW-0472">Membrane</keyword>
<keyword id="KW-0589">Pheromone response</keyword>
<keyword id="KW-0675">Receptor</keyword>
<keyword id="KW-1185">Reference proteome</keyword>
<keyword id="KW-0807">Transducer</keyword>
<keyword id="KW-0812">Transmembrane</keyword>
<keyword id="KW-1133">Transmembrane helix</keyword>
<comment type="function">
    <text>Putative pheromone receptor.</text>
</comment>
<comment type="subcellular location">
    <subcellularLocation>
        <location>Cell membrane</location>
        <topology>Multi-pass membrane protein</topology>
    </subcellularLocation>
</comment>
<comment type="polymorphism">
    <text evidence="2">There is an allele VN1R5*2 with a truncating mutation in position 46. It was found with a frequency of about 32%.</text>
</comment>
<comment type="miscellaneous">
    <text>The chimpanzee and orangutan orthologous proteins do not exist, their genes are pseudogenes.</text>
</comment>
<comment type="similarity">
    <text evidence="3">Belongs to the G-protein coupled receptor 1 family.</text>
</comment>
<comment type="online information" name="Protein Spotlight">
    <link uri="https://www.proteinspotlight.org/back_issues/061"/>
    <text>No one nose - Issue 61 of August 2005</text>
</comment>
<proteinExistence type="evidence at transcript level"/>
<organism>
    <name type="scientific">Homo sapiens</name>
    <name type="common">Human</name>
    <dbReference type="NCBI Taxonomy" id="9606"/>
    <lineage>
        <taxon>Eukaryota</taxon>
        <taxon>Metazoa</taxon>
        <taxon>Chordata</taxon>
        <taxon>Craniata</taxon>
        <taxon>Vertebrata</taxon>
        <taxon>Euteleostomi</taxon>
        <taxon>Mammalia</taxon>
        <taxon>Eutheria</taxon>
        <taxon>Euarchontoglires</taxon>
        <taxon>Primates</taxon>
        <taxon>Haplorrhini</taxon>
        <taxon>Catarrhini</taxon>
        <taxon>Hominidae</taxon>
        <taxon>Homo</taxon>
    </lineage>
</organism>
<evidence type="ECO:0000255" key="1"/>
<evidence type="ECO:0000269" key="2">
    <source>
    </source>
</evidence>
<evidence type="ECO:0000305" key="3"/>
<feature type="chain" id="PRO_0000070220" description="Vomeronasal type-1 receptor 5">
    <location>
        <begin position="1"/>
        <end position="357"/>
    </location>
</feature>
<feature type="topological domain" description="Extracellular" evidence="1">
    <location>
        <begin position="1"/>
        <end position="3"/>
    </location>
</feature>
<feature type="transmembrane region" description="Helical; Name=1" evidence="1">
    <location>
        <begin position="4"/>
        <end position="24"/>
    </location>
</feature>
<feature type="topological domain" description="Cytoplasmic" evidence="1">
    <location>
        <begin position="25"/>
        <end position="52"/>
    </location>
</feature>
<feature type="transmembrane region" description="Helical; Name=2" evidence="1">
    <location>
        <begin position="53"/>
        <end position="73"/>
    </location>
</feature>
<feature type="topological domain" description="Extracellular" evidence="1">
    <location>
        <begin position="74"/>
        <end position="81"/>
    </location>
</feature>
<feature type="transmembrane region" description="Helical; Name=3" evidence="1">
    <location>
        <begin position="82"/>
        <end position="102"/>
    </location>
</feature>
<feature type="topological domain" description="Cytoplasmic" evidence="1">
    <location>
        <begin position="103"/>
        <end position="130"/>
    </location>
</feature>
<feature type="transmembrane region" description="Helical; Name=4" evidence="1">
    <location>
        <begin position="131"/>
        <end position="151"/>
    </location>
</feature>
<feature type="topological domain" description="Extracellular" evidence="1">
    <location>
        <begin position="152"/>
        <end position="163"/>
    </location>
</feature>
<feature type="transmembrane region" description="Helical; Name=5" evidence="1">
    <location>
        <begin position="164"/>
        <end position="184"/>
    </location>
</feature>
<feature type="topological domain" description="Cytoplasmic" evidence="1">
    <location>
        <begin position="185"/>
        <end position="269"/>
    </location>
</feature>
<feature type="transmembrane region" description="Helical; Name=6" evidence="1">
    <location>
        <begin position="270"/>
        <end position="290"/>
    </location>
</feature>
<feature type="topological domain" description="Extracellular" evidence="1">
    <location>
        <begin position="291"/>
        <end position="300"/>
    </location>
</feature>
<feature type="transmembrane region" description="Helical; Name=7" evidence="1">
    <location>
        <begin position="301"/>
        <end position="321"/>
    </location>
</feature>
<feature type="topological domain" description="Cytoplasmic" evidence="1">
    <location>
        <begin position="322"/>
        <end position="357"/>
    </location>
</feature>
<feature type="glycosylation site" description="N-linked (GlcNAc...) asparagine" evidence="1">
    <location>
        <position position="297"/>
    </location>
</feature>
<feature type="sequence variant" id="VAR_022802" description="In allele VN1R5*3; dbSNP:rs41308154." evidence="2">
    <original>R</original>
    <variation>C</variation>
    <location>
        <position position="350"/>
    </location>
</feature>
<feature type="sequence conflict" description="In Ref. 3; BAB89321." evidence="3" ref="3">
    <original>F</original>
    <variation>Y</variation>
    <location>
        <position position="66"/>
    </location>
</feature>
<dbReference type="EMBL" id="AY114735">
    <property type="protein sequence ID" value="AAM66756.1"/>
    <property type="molecule type" value="Genomic_DNA"/>
</dbReference>
<dbReference type="EMBL" id="AY312489">
    <property type="protein sequence ID" value="AAP85622.1"/>
    <property type="molecule type" value="Genomic_DNA"/>
</dbReference>
<dbReference type="EMBL" id="AY312490">
    <property type="status" value="NOT_ANNOTATED_CDS"/>
    <property type="molecule type" value="Genomic_DNA"/>
</dbReference>
<dbReference type="EMBL" id="AY312491">
    <property type="protein sequence ID" value="AAP85623.1"/>
    <property type="molecule type" value="Genomic_DNA"/>
</dbReference>
<dbReference type="EMBL" id="AB083608">
    <property type="protein sequence ID" value="BAB89321.1"/>
    <property type="molecule type" value="Genomic_DNA"/>
</dbReference>
<dbReference type="EMBL" id="BC126341">
    <property type="protein sequence ID" value="AAI26342.1"/>
    <property type="molecule type" value="mRNA"/>
</dbReference>
<dbReference type="EMBL" id="BC126367">
    <property type="protein sequence ID" value="AAI26368.1"/>
    <property type="molecule type" value="mRNA"/>
</dbReference>
<dbReference type="RefSeq" id="NP_776257.1">
    <property type="nucleotide sequence ID" value="NM_173858.1"/>
</dbReference>
<dbReference type="SMR" id="Q7Z5H4"/>
<dbReference type="BioGRID" id="130446">
    <property type="interactions" value="3"/>
</dbReference>
<dbReference type="FunCoup" id="Q7Z5H4">
    <property type="interactions" value="23"/>
</dbReference>
<dbReference type="IntAct" id="Q7Z5H4">
    <property type="interactions" value="2"/>
</dbReference>
<dbReference type="MINT" id="Q7Z5H4"/>
<dbReference type="GlyCosmos" id="Q7Z5H4">
    <property type="glycosylation" value="1 site, No reported glycans"/>
</dbReference>
<dbReference type="GlyGen" id="Q7Z5H4">
    <property type="glycosylation" value="1 site"/>
</dbReference>
<dbReference type="iPTMnet" id="Q7Z5H4"/>
<dbReference type="PhosphoSitePlus" id="Q7Z5H4"/>
<dbReference type="BioMuta" id="VN1R5"/>
<dbReference type="MassIVE" id="Q7Z5H4"/>
<dbReference type="ProteomicsDB" id="69293"/>
<dbReference type="TopDownProteomics" id="Q7Z5H4"/>
<dbReference type="DNASU" id="317705"/>
<dbReference type="Ensembl" id="ENST00000709096.1">
    <property type="protein sequence ID" value="ENSP00000517501.1"/>
    <property type="gene ID" value="ENSG00000291888.2"/>
</dbReference>
<dbReference type="Ensembl" id="ENST00000713554.1">
    <property type="protein sequence ID" value="ENSP00000518848.1"/>
    <property type="gene ID" value="ENSG00000291888.2"/>
</dbReference>
<dbReference type="GeneID" id="317705"/>
<dbReference type="KEGG" id="hsa:317705"/>
<dbReference type="MANE-Select" id="ENST00000713554.1">
    <property type="protein sequence ID" value="ENSP00000518848.1"/>
    <property type="RefSeq nucleotide sequence ID" value="NM_173858.1"/>
    <property type="RefSeq protein sequence ID" value="NP_776257.1"/>
</dbReference>
<dbReference type="AGR" id="HGNC:19870"/>
<dbReference type="CTD" id="317705"/>
<dbReference type="DisGeNET" id="317705"/>
<dbReference type="GeneCards" id="VN1R5"/>
<dbReference type="HGNC" id="HGNC:19870">
    <property type="gene designation" value="VN1R5"/>
</dbReference>
<dbReference type="neXtProt" id="NX_Q7Z5H4"/>
<dbReference type="PharmGKB" id="PA134993066"/>
<dbReference type="InParanoid" id="Q7Z5H4"/>
<dbReference type="OrthoDB" id="9606139at2759"/>
<dbReference type="PAN-GO" id="Q7Z5H4">
    <property type="GO annotations" value="0 GO annotations based on evolutionary models"/>
</dbReference>
<dbReference type="PhylomeDB" id="Q7Z5H4"/>
<dbReference type="PathwayCommons" id="Q7Z5H4"/>
<dbReference type="SignaLink" id="Q7Z5H4"/>
<dbReference type="BioGRID-ORCS" id="317705">
    <property type="hits" value="5 hits in 239 CRISPR screens"/>
</dbReference>
<dbReference type="GeneWiki" id="VN1R5"/>
<dbReference type="GenomeRNAi" id="317705"/>
<dbReference type="Pharos" id="Q7Z5H4">
    <property type="development level" value="Tdark"/>
</dbReference>
<dbReference type="PRO" id="PR:Q7Z5H4"/>
<dbReference type="Proteomes" id="UP000005640">
    <property type="component" value="Unplaced"/>
</dbReference>
<dbReference type="RNAct" id="Q7Z5H4">
    <property type="molecule type" value="protein"/>
</dbReference>
<dbReference type="GO" id="GO:0005886">
    <property type="term" value="C:plasma membrane"/>
    <property type="evidence" value="ECO:0007669"/>
    <property type="project" value="UniProtKB-SubCell"/>
</dbReference>
<dbReference type="GO" id="GO:0016503">
    <property type="term" value="F:pheromone receptor activity"/>
    <property type="evidence" value="ECO:0007669"/>
    <property type="project" value="InterPro"/>
</dbReference>
<dbReference type="GO" id="GO:0019236">
    <property type="term" value="P:response to pheromone"/>
    <property type="evidence" value="ECO:0007669"/>
    <property type="project" value="UniProtKB-KW"/>
</dbReference>
<dbReference type="CDD" id="cd13949">
    <property type="entry name" value="7tm_V1R_pheromone"/>
    <property type="match status" value="1"/>
</dbReference>
<dbReference type="InterPro" id="IPR004072">
    <property type="entry name" value="Vmron_rcpt_1"/>
</dbReference>
<dbReference type="PANTHER" id="PTHR24062">
    <property type="entry name" value="VOMERONASAL TYPE-1 RECEPTOR"/>
    <property type="match status" value="1"/>
</dbReference>
<dbReference type="Pfam" id="PF03402">
    <property type="entry name" value="V1R"/>
    <property type="match status" value="1"/>
</dbReference>
<dbReference type="PRINTS" id="PR01534">
    <property type="entry name" value="VOMERONASL1R"/>
</dbReference>
<dbReference type="SUPFAM" id="SSF81321">
    <property type="entry name" value="Family A G protein-coupled receptor-like"/>
    <property type="match status" value="1"/>
</dbReference>
<gene>
    <name type="primary">VN1R5</name>
    <name type="synonym">V1RL5</name>
</gene>
<name>VN1R5_HUMAN</name>